<gene>
    <name type="primary">DVR</name>
</gene>
<reference key="1">
    <citation type="journal article" date="2013" name="Plant Physiol.">
        <title>One divinyl reductase reduces the 8-vinyl groups in various intermediates of chlorophyll biosynthesis in a given higher plant species, but the isozyme differs between species.</title>
        <authorList>
            <person name="Wang P."/>
            <person name="Wan C."/>
            <person name="Xu Z."/>
            <person name="Wang P."/>
            <person name="Wang W."/>
            <person name="Sun C."/>
            <person name="Ma X."/>
            <person name="Xiao Y."/>
            <person name="Zhu J."/>
            <person name="Gao X."/>
            <person name="Deng X."/>
        </authorList>
    </citation>
    <scope>NUCLEOTIDE SEQUENCE [GENOMIC DNA]</scope>
    <scope>FUNCTION</scope>
    <scope>CATALYTIC ACTIVITY</scope>
    <scope>BIOPHYSICOCHEMICAL PROPERTIES</scope>
</reference>
<accession>J9RYI6</accession>
<dbReference type="EC" id="1.3.1.75" evidence="3"/>
<dbReference type="EMBL" id="JX239753">
    <property type="protein sequence ID" value="AFR53113.1"/>
    <property type="molecule type" value="Genomic_DNA"/>
</dbReference>
<dbReference type="RefSeq" id="NP_001412224.1">
    <property type="nucleotide sequence ID" value="NM_001425295.1"/>
</dbReference>
<dbReference type="RefSeq" id="XP_004134186.1">
    <property type="nucleotide sequence ID" value="XM_004134138.2"/>
</dbReference>
<dbReference type="SMR" id="J9RYI6"/>
<dbReference type="EnsemblPlants" id="KGN57068">
    <property type="protein sequence ID" value="KGN57068"/>
    <property type="gene ID" value="Csa_3G151460"/>
</dbReference>
<dbReference type="GeneID" id="101218189"/>
<dbReference type="Gramene" id="KGN57068">
    <property type="protein sequence ID" value="KGN57068"/>
    <property type="gene ID" value="Csa_3G151460"/>
</dbReference>
<dbReference type="KEGG" id="csv:101218189"/>
<dbReference type="eggNOG" id="KOG1203">
    <property type="taxonomic scope" value="Eukaryota"/>
</dbReference>
<dbReference type="OMA" id="ASFIVDC"/>
<dbReference type="OrthoDB" id="419598at2759"/>
<dbReference type="BRENDA" id="1.3.1.75">
    <property type="organism ID" value="1733"/>
</dbReference>
<dbReference type="UniPathway" id="UPA00668"/>
<dbReference type="GO" id="GO:0009507">
    <property type="term" value="C:chloroplast"/>
    <property type="evidence" value="ECO:0007669"/>
    <property type="project" value="UniProtKB-SubCell"/>
</dbReference>
<dbReference type="GO" id="GO:0033728">
    <property type="term" value="F:3,8-divinyl protochlorophyllide a 8-vinyl-reductase (NADPH) activity"/>
    <property type="evidence" value="ECO:0007669"/>
    <property type="project" value="UniProtKB-EC"/>
</dbReference>
<dbReference type="GO" id="GO:0015995">
    <property type="term" value="P:chlorophyll biosynthetic process"/>
    <property type="evidence" value="ECO:0007669"/>
    <property type="project" value="UniProtKB-UniPathway"/>
</dbReference>
<dbReference type="CDD" id="cd05243">
    <property type="entry name" value="SDR_a5"/>
    <property type="match status" value="1"/>
</dbReference>
<dbReference type="FunFam" id="3.40.50.720:FF:001068">
    <property type="entry name" value="Divinyl chlorophyllide a 8-vinyl-reductase, chloroplastic"/>
    <property type="match status" value="1"/>
</dbReference>
<dbReference type="Gene3D" id="3.40.50.720">
    <property type="entry name" value="NAD(P)-binding Rossmann-like Domain"/>
    <property type="match status" value="1"/>
</dbReference>
<dbReference type="InterPro" id="IPR044201">
    <property type="entry name" value="DVR-like"/>
</dbReference>
<dbReference type="InterPro" id="IPR016040">
    <property type="entry name" value="NAD(P)-bd_dom"/>
</dbReference>
<dbReference type="InterPro" id="IPR036291">
    <property type="entry name" value="NAD(P)-bd_dom_sf"/>
</dbReference>
<dbReference type="PANTHER" id="PTHR47378">
    <property type="entry name" value="DIVINYL CHLOROPHYLLIDE A 8-VINYL-REDUCTASE, CHLOROPLASTIC"/>
    <property type="match status" value="1"/>
</dbReference>
<dbReference type="PANTHER" id="PTHR47378:SF1">
    <property type="entry name" value="DIVINYL CHLOROPHYLLIDE A 8-VINYL-REDUCTASE, CHLOROPLASTIC"/>
    <property type="match status" value="1"/>
</dbReference>
<dbReference type="Pfam" id="PF13460">
    <property type="entry name" value="NAD_binding_10"/>
    <property type="match status" value="1"/>
</dbReference>
<dbReference type="SUPFAM" id="SSF51735">
    <property type="entry name" value="NAD(P)-binding Rossmann-fold domains"/>
    <property type="match status" value="1"/>
</dbReference>
<name>DCVR_CUCSA</name>
<organism>
    <name type="scientific">Cucumis sativus</name>
    <name type="common">Cucumber</name>
    <dbReference type="NCBI Taxonomy" id="3659"/>
    <lineage>
        <taxon>Eukaryota</taxon>
        <taxon>Viridiplantae</taxon>
        <taxon>Streptophyta</taxon>
        <taxon>Embryophyta</taxon>
        <taxon>Tracheophyta</taxon>
        <taxon>Spermatophyta</taxon>
        <taxon>Magnoliopsida</taxon>
        <taxon>eudicotyledons</taxon>
        <taxon>Gunneridae</taxon>
        <taxon>Pentapetalae</taxon>
        <taxon>rosids</taxon>
        <taxon>fabids</taxon>
        <taxon>Cucurbitales</taxon>
        <taxon>Cucurbitaceae</taxon>
        <taxon>Benincaseae</taxon>
        <taxon>Cucumis</taxon>
    </lineage>
</organism>
<sequence>MSICSTVGAGLNLHSPANATNSTRLSSNFVHQIPVSSFSFSFQSSSLRLSQTPKFSRQRRNPIVVSSTPVVESTKSSFRAKNPKDTNILVVGSTGYIGNFVVKELVSRGFNVIAIAREKSGIKGRNSKEQASDQLKGANVCFSDVSHLDVLEKSLGDLDVPIDVVVSCLASRTGGIKDSWKIDYEATKNSLVAGRNRGASHFVLLSAICVQKPLLEFQRAKLKFEAELMEAAKEDSGFTYSIVRPTAFFKSLGGQVELVKDGKPYVMFGDGKLCACKPISEQDLASFIADCVLSEDKINQVLPIGGPGKALTPLEQGEILFRLLGKEPNFFKVPIGIMDFAIGVLDFLVKFFPAMEDAAEYGKIGRYYAAESMLILDPETGEYSADKTPSYGKDTLEDFFERVLSEGMAGQELGEQSVF</sequence>
<comment type="function">
    <text evidence="3">Catalyzes the conversion of divinyl chlorophyllide to monovinyl chlorophyllide. Reduces the 8-vinyl group of the tetrapyrrole to an ethyl group using NADPH as the reductant. The best substrate is (3,8-divinyl)-chlorophyllide a (DV-Chlidea). Very low activity with (3,8-divinyl)-protochlorophyllide a (DV-Pchlidea) and (3,8-divinyl)-magnesium-protoporphyrin IX monomethyl ester (DV-MPE). No activity with (3,8-divinyl)-magnesium-protoporphyrin IX (DV-Mg-Proto) and (3,8-divinyl)-chlorophyll a (DV-Chla).</text>
</comment>
<comment type="catalytic activity">
    <reaction evidence="3">
        <text>protochlorophyllide a + NADP(+) = 3,8-divinyl protochlorophyllide a + NADPH + H(+)</text>
        <dbReference type="Rhea" id="RHEA:48884"/>
        <dbReference type="ChEBI" id="CHEBI:15378"/>
        <dbReference type="ChEBI" id="CHEBI:57783"/>
        <dbReference type="ChEBI" id="CHEBI:58349"/>
        <dbReference type="ChEBI" id="CHEBI:58632"/>
        <dbReference type="ChEBI" id="CHEBI:83350"/>
        <dbReference type="EC" id="1.3.1.75"/>
    </reaction>
</comment>
<comment type="biophysicochemical properties">
    <phDependence>
        <text evidence="3">Optimum pH is 7.0 with DV-Chlidea or DV-Pchlidea as substrate, optimum pH is 6.5 with DV-MPE as substrate.</text>
    </phDependence>
    <temperatureDependence>
        <text evidence="3">Optimum temperature is 25 degrees Celsius with DV-Chlidea as substrate, Optimum temperature is 20 degrees Celsius with DV-Pchlidea or DV-MPE as substrate.</text>
    </temperatureDependence>
</comment>
<comment type="pathway">
    <text>Porphyrin-containing compound metabolism; chlorophyll biosynthesis.</text>
</comment>
<comment type="subcellular location">
    <subcellularLocation>
        <location evidence="1">Plastid</location>
        <location evidence="1">Chloroplast</location>
    </subcellularLocation>
</comment>
<feature type="transit peptide" description="Chloroplast" evidence="2">
    <location>
        <begin position="1"/>
        <end position="71"/>
    </location>
</feature>
<feature type="chain" id="PRO_0000422538" description="Divinyl chlorophyllide a 8-vinyl-reductase, chloroplastic">
    <location>
        <begin position="72"/>
        <end position="419"/>
    </location>
</feature>
<evidence type="ECO:0000250" key="1"/>
<evidence type="ECO:0000255" key="2"/>
<evidence type="ECO:0000269" key="3">
    <source>
    </source>
</evidence>
<keyword id="KW-0149">Chlorophyll biosynthesis</keyword>
<keyword id="KW-0150">Chloroplast</keyword>
<keyword id="KW-0521">NADP</keyword>
<keyword id="KW-0560">Oxidoreductase</keyword>
<keyword id="KW-0934">Plastid</keyword>
<keyword id="KW-0809">Transit peptide</keyword>
<protein>
    <recommendedName>
        <fullName>Divinyl chlorophyllide a 8-vinyl-reductase, chloroplastic</fullName>
        <ecNumber evidence="3">1.3.1.75</ecNumber>
    </recommendedName>
</protein>
<proteinExistence type="evidence at protein level"/>